<sequence length="441" mass="47918">MKITVRSSTVVVPAAETPRVRLWNANPDLVVPRFHTPSVYFYRRGGEDGGDACYFDAGRMRRALAEALVPFYPMAGRLAHDEDGRVEIDCNAEGVLFVEADAPDGAVDDFGDFVPTMGLKRLIPTVDFTGGISSYPLLVVQVTHFKCGGVALGIAMQHHVADGFSGLHFINSWSDLCRGVPIAVMPFIDRTLLRARDPPVPTHPHIEYQPAPAMLGSEEPQALAGKPESPPTAVDIFKLSRSDLGRLRAQLPTGEGAPRFSTYAVLGAHVWRCASLARGLAPEQPTKLYCATDGRQRLTPTHPDGYFGNVIFTATPLAEAGKVTGSLADGATTIQDALEKMDDEYCHSALDYLELQPDLSALVRGAHTFRCPNLGLTSWVRLPIHDADFGWGRPVFMGPGGIAYEGLAFVLPSANRDGSLSVAISLQAEHMEKFRKMIFDF</sequence>
<name>HHT1_AVESA</name>
<accession>Q7XXP3</accession>
<gene>
    <name evidence="4" type="primary">HHT1</name>
</gene>
<proteinExistence type="evidence at protein level"/>
<feature type="chain" id="PRO_0000454971" description="Hydroxycinnamoyl-CoA:5-hydroxyanthranilate N-hydroxycinnamoyltransferase HHT1">
    <location>
        <begin position="1"/>
        <end position="441"/>
    </location>
</feature>
<feature type="active site" description="Proton acceptor" evidence="1">
    <location>
        <position position="158"/>
    </location>
</feature>
<feature type="active site" description="Proton acceptor" evidence="1">
    <location>
        <position position="388"/>
    </location>
</feature>
<keyword id="KW-0012">Acyltransferase</keyword>
<keyword id="KW-0611">Plant defense</keyword>
<keyword id="KW-0808">Transferase</keyword>
<dbReference type="EC" id="2.3.1.302" evidence="3"/>
<dbReference type="EMBL" id="AB076980">
    <property type="protein sequence ID" value="BAC78633.1"/>
    <property type="molecule type" value="mRNA"/>
</dbReference>
<dbReference type="SMR" id="Q7XXP3"/>
<dbReference type="KEGG" id="ag:BAC78633"/>
<dbReference type="BRENDA" id="2.3.1.302">
    <property type="organism ID" value="588"/>
</dbReference>
<dbReference type="GO" id="GO:0016747">
    <property type="term" value="F:acyltransferase activity, transferring groups other than amino-acyl groups"/>
    <property type="evidence" value="ECO:0007669"/>
    <property type="project" value="TreeGrafter"/>
</dbReference>
<dbReference type="GO" id="GO:0006952">
    <property type="term" value="P:defense response"/>
    <property type="evidence" value="ECO:0007669"/>
    <property type="project" value="UniProtKB-KW"/>
</dbReference>
<dbReference type="FunFam" id="3.30.559.10:FF:000015">
    <property type="entry name" value="Spermidine hydroxycinnamoyl transferase"/>
    <property type="match status" value="1"/>
</dbReference>
<dbReference type="FunFam" id="3.30.559.10:FF:000008">
    <property type="entry name" value="Tryptamine hydroxycinnamoyl transferase"/>
    <property type="match status" value="1"/>
</dbReference>
<dbReference type="Gene3D" id="3.30.559.10">
    <property type="entry name" value="Chloramphenicol acetyltransferase-like domain"/>
    <property type="match status" value="2"/>
</dbReference>
<dbReference type="InterPro" id="IPR023213">
    <property type="entry name" value="CAT-like_dom_sf"/>
</dbReference>
<dbReference type="InterPro" id="IPR050317">
    <property type="entry name" value="Plant_Fungal_Acyltransferase"/>
</dbReference>
<dbReference type="PANTHER" id="PTHR31642:SF166">
    <property type="entry name" value="HYDROXYCINNAMOYLTRANSFERASE 2"/>
    <property type="match status" value="1"/>
</dbReference>
<dbReference type="PANTHER" id="PTHR31642">
    <property type="entry name" value="TRICHOTHECENE 3-O-ACETYLTRANSFERASE"/>
    <property type="match status" value="1"/>
</dbReference>
<dbReference type="Pfam" id="PF02458">
    <property type="entry name" value="Transferase"/>
    <property type="match status" value="1"/>
</dbReference>
<organism>
    <name type="scientific">Avena sativa</name>
    <name type="common">Oat</name>
    <dbReference type="NCBI Taxonomy" id="4498"/>
    <lineage>
        <taxon>Eukaryota</taxon>
        <taxon>Viridiplantae</taxon>
        <taxon>Streptophyta</taxon>
        <taxon>Embryophyta</taxon>
        <taxon>Tracheophyta</taxon>
        <taxon>Spermatophyta</taxon>
        <taxon>Magnoliopsida</taxon>
        <taxon>Liliopsida</taxon>
        <taxon>Poales</taxon>
        <taxon>Poaceae</taxon>
        <taxon>BOP clade</taxon>
        <taxon>Pooideae</taxon>
        <taxon>Poodae</taxon>
        <taxon>Poeae</taxon>
        <taxon>Poeae Chloroplast Group 1 (Aveneae type)</taxon>
        <taxon>Aveninae</taxon>
        <taxon>Avena</taxon>
    </lineage>
</organism>
<comment type="function">
    <text evidence="3">Involved in the biosynthesis of avenanthramide phytoalexins, which are phenolic alkaloids found mainly in oats (PubMed:31394723). Catalyzes the N-acylation of 5-hydroxyanthranilate with 4-coumaroyl-CoA or caffeoyl-CoA as acyl donors, forming avenanthramide A and avenanthramide C, respectively (PubMed:31394723). Does not accept feruloyl-CoA as a substrate (PubMed:31394723).</text>
</comment>
<comment type="catalytic activity">
    <reaction evidence="3">
        <text>5-hydroxyanthranilate + (E)-4-coumaroyl-CoA = avenanthramide A + CoA</text>
        <dbReference type="Rhea" id="RHEA:66932"/>
        <dbReference type="ChEBI" id="CHEBI:57287"/>
        <dbReference type="ChEBI" id="CHEBI:85008"/>
        <dbReference type="ChEBI" id="CHEBI:167463"/>
        <dbReference type="ChEBI" id="CHEBI:167464"/>
        <dbReference type="EC" id="2.3.1.302"/>
    </reaction>
    <physiologicalReaction direction="left-to-right" evidence="3">
        <dbReference type="Rhea" id="RHEA:66933"/>
    </physiologicalReaction>
</comment>
<comment type="catalytic activity">
    <reaction evidence="3">
        <text>5-hydroxyanthranilate + (E)-caffeoyl-CoA = avenanthramide C + CoA</text>
        <dbReference type="Rhea" id="RHEA:66936"/>
        <dbReference type="ChEBI" id="CHEBI:57287"/>
        <dbReference type="ChEBI" id="CHEBI:87136"/>
        <dbReference type="ChEBI" id="CHEBI:167463"/>
        <dbReference type="ChEBI" id="CHEBI:167577"/>
        <dbReference type="EC" id="2.3.1.302"/>
    </reaction>
    <physiologicalReaction direction="left-to-right" evidence="3">
        <dbReference type="Rhea" id="RHEA:66937"/>
    </physiologicalReaction>
</comment>
<comment type="induction">
    <text evidence="2">Induced by the crown rust fungus Puccinia coronata and the phytotoxin victorin.</text>
</comment>
<comment type="similarity">
    <text evidence="5">Belongs to the plant acyltransferase family.</text>
</comment>
<evidence type="ECO:0000250" key="1">
    <source>
        <dbReference type="UniProtKB" id="Q8W1W9"/>
    </source>
</evidence>
<evidence type="ECO:0000269" key="2">
    <source>
    </source>
</evidence>
<evidence type="ECO:0000269" key="3">
    <source>
    </source>
</evidence>
<evidence type="ECO:0000303" key="4">
    <source>
    </source>
</evidence>
<evidence type="ECO:0000305" key="5"/>
<protein>
    <recommendedName>
        <fullName evidence="5">Hydroxycinnamoyl-CoA:5-hydroxyanthranilate N-hydroxycinnamoyltransferase HHT1</fullName>
        <ecNumber evidence="3">2.3.1.302</ecNumber>
    </recommendedName>
    <alternativeName>
        <fullName evidence="4">Hydroxyanthranilate hydroxycinnamoyltransferase 1</fullName>
        <shortName evidence="4">AsHHT1</shortName>
    </alternativeName>
</protein>
<reference key="1">
    <citation type="journal article" date="2004" name="Mol. Plant Microbe Interact.">
        <title>Analysis of the involvement of hydroxyanthranilate hydroxycinnamoyltransferase and caffeoyl-CoA 3-O-methyltransferase in phytoalexin biosynthesis in oat.</title>
        <authorList>
            <person name="Yang Q."/>
            <person name="Trinh H.X."/>
            <person name="Imai S."/>
            <person name="Ishihara A."/>
            <person name="Zhang L."/>
            <person name="Nakayashiki H."/>
            <person name="Tosa Y."/>
            <person name="Mayama S."/>
        </authorList>
    </citation>
    <scope>NUCLEOTIDE SEQUENCE [MRNA]</scope>
    <scope>INDUCTION</scope>
</reference>
<reference key="2">
    <citation type="journal article" date="2019" name="Metabolites">
        <title>The biosynthetic pathway of major avenanthramides in oat.</title>
        <authorList>
            <person name="Li Z."/>
            <person name="Chen Y."/>
            <person name="Meesapyodsuk D."/>
            <person name="Qiu X."/>
        </authorList>
    </citation>
    <scope>FUNCTION</scope>
    <scope>CATALYTIC ACTIVITY</scope>
</reference>